<organism>
    <name type="scientific">Mus musculus</name>
    <name type="common">Mouse</name>
    <dbReference type="NCBI Taxonomy" id="10090"/>
    <lineage>
        <taxon>Eukaryota</taxon>
        <taxon>Metazoa</taxon>
        <taxon>Chordata</taxon>
        <taxon>Craniata</taxon>
        <taxon>Vertebrata</taxon>
        <taxon>Euteleostomi</taxon>
        <taxon>Mammalia</taxon>
        <taxon>Eutheria</taxon>
        <taxon>Euarchontoglires</taxon>
        <taxon>Glires</taxon>
        <taxon>Rodentia</taxon>
        <taxon>Myomorpha</taxon>
        <taxon>Muroidea</taxon>
        <taxon>Muridae</taxon>
        <taxon>Murinae</taxon>
        <taxon>Mus</taxon>
        <taxon>Mus</taxon>
    </lineage>
</organism>
<proteinExistence type="evidence at protein level"/>
<evidence type="ECO:0000250" key="1">
    <source>
        <dbReference type="UniProtKB" id="Q6P2H3"/>
    </source>
</evidence>
<evidence type="ECO:0000255" key="2"/>
<evidence type="ECO:0000256" key="3">
    <source>
        <dbReference type="SAM" id="MobiDB-lite"/>
    </source>
</evidence>
<evidence type="ECO:0000305" key="4"/>
<evidence type="ECO:0007744" key="5">
    <source>
    </source>
</evidence>
<name>CEP85_MOUSE</name>
<comment type="function">
    <text evidence="1">Acts as a regulator of centriole duplication through a direct interaction with STIL, a key factor involved in the early steps of centriole formation. The CEP85-STIL protein complex acts as a modulator of PLK4-driven cytoskeletal rearrangements and directional cell motility. Acts as a negative regulator of NEK2 to maintain the centrosome integrity in interphase. Suppresses centrosome disjunction by inhibiting NEK2 kinase activity.</text>
</comment>
<comment type="subunit">
    <text evidence="1">Homodimer. Interacts with STIL (via N-terminus); this interaction is essential for robust PLK4 activation and efficient centriole assembly and for PLK4-dependent cell migration. Interacts with PLK4; required for CEP85 to be able to drive centriole duplication and cell migration.</text>
</comment>
<comment type="subcellular location">
    <subcellularLocation>
        <location evidence="1">Cytoplasm</location>
        <location evidence="1">Cytoskeleton</location>
        <location evidence="1">Microtubule organizing center</location>
        <location evidence="1">Centrosome</location>
    </subcellularLocation>
    <subcellularLocation>
        <location evidence="1">Cytoplasm</location>
        <location evidence="1">Cytoskeleton</location>
        <location evidence="1">Spindle pole</location>
    </subcellularLocation>
    <subcellularLocation>
        <location evidence="1">Nucleus</location>
        <location evidence="1">Nucleolus</location>
    </subcellularLocation>
    <subcellularLocation>
        <location evidence="1">Cytoplasm</location>
        <location evidence="1">Cytoskeleton</location>
        <location evidence="1">Microtubule organizing center</location>
        <location evidence="1">Centrosome</location>
        <location evidence="1">Centriole</location>
    </subcellularLocation>
    <subcellularLocation>
        <location evidence="1">Cytoplasm</location>
        <location evidence="1">Cell cortex</location>
    </subcellularLocation>
    <text evidence="1">Localizes to centrosomes and nucleolus in interphase. Upon entry into mitosis, relocates from nucleolus and accumulates at spindle poles. Associated with the pericentriolar material. Localizes to centrosomes at a low level in G1 phase and a slightly increased level in S phase, with gradually elevated levels during G2 phase. The levels at centrosomes further increase at G2/M, reaching a peak at spindle poles at early mitotic stages and remain high until the end of anaphase. Localizes at the leading edge.</text>
</comment>
<comment type="similarity">
    <text evidence="4">Belongs to the CEP85 family.</text>
</comment>
<dbReference type="EMBL" id="AK030742">
    <property type="protein sequence ID" value="BAC27110.1"/>
    <property type="molecule type" value="mRNA"/>
</dbReference>
<dbReference type="EMBL" id="AK085545">
    <property type="protein sequence ID" value="BAC39468.1"/>
    <property type="molecule type" value="mRNA"/>
</dbReference>
<dbReference type="EMBL" id="BC031729">
    <property type="protein sequence ID" value="AAH31729.1"/>
    <property type="molecule type" value="mRNA"/>
</dbReference>
<dbReference type="CCDS" id="CCDS18765.1"/>
<dbReference type="RefSeq" id="NP_653110.3">
    <property type="nucleotide sequence ID" value="NM_144527.3"/>
</dbReference>
<dbReference type="RefSeq" id="XP_011248632.1">
    <property type="nucleotide sequence ID" value="XM_011250330.2"/>
</dbReference>
<dbReference type="RefSeq" id="XP_036020300.1">
    <property type="nucleotide sequence ID" value="XM_036164407.1"/>
</dbReference>
<dbReference type="SMR" id="Q8BMK0"/>
<dbReference type="BioGRID" id="213817">
    <property type="interactions" value="7"/>
</dbReference>
<dbReference type="FunCoup" id="Q8BMK0">
    <property type="interactions" value="1201"/>
</dbReference>
<dbReference type="IntAct" id="Q8BMK0">
    <property type="interactions" value="6"/>
</dbReference>
<dbReference type="MINT" id="Q8BMK0"/>
<dbReference type="STRING" id="10090.ENSMUSP00000039889"/>
<dbReference type="iPTMnet" id="Q8BMK0"/>
<dbReference type="PhosphoSitePlus" id="Q8BMK0"/>
<dbReference type="SwissPalm" id="Q8BMK0"/>
<dbReference type="jPOST" id="Q8BMK0"/>
<dbReference type="PaxDb" id="10090-ENSMUSP00000039889"/>
<dbReference type="ProteomicsDB" id="283886"/>
<dbReference type="Pumba" id="Q8BMK0"/>
<dbReference type="Antibodypedia" id="16049">
    <property type="antibodies" value="70 antibodies from 16 providers"/>
</dbReference>
<dbReference type="Ensembl" id="ENSMUST00000040271.12">
    <property type="protein sequence ID" value="ENSMUSP00000039889.6"/>
    <property type="gene ID" value="ENSMUSG00000037443.14"/>
</dbReference>
<dbReference type="GeneID" id="70012"/>
<dbReference type="KEGG" id="mmu:70012"/>
<dbReference type="UCSC" id="uc008ved.2">
    <property type="organism name" value="mouse"/>
</dbReference>
<dbReference type="AGR" id="MGI:1917262"/>
<dbReference type="CTD" id="64793"/>
<dbReference type="MGI" id="MGI:1917262">
    <property type="gene designation" value="Cep85"/>
</dbReference>
<dbReference type="VEuPathDB" id="HostDB:ENSMUSG00000037443"/>
<dbReference type="eggNOG" id="ENOG502QR5U">
    <property type="taxonomic scope" value="Eukaryota"/>
</dbReference>
<dbReference type="GeneTree" id="ENSGT00620000087993"/>
<dbReference type="HOGENOM" id="CLU_020103_0_0_1"/>
<dbReference type="InParanoid" id="Q8BMK0"/>
<dbReference type="OMA" id="HFSETDW"/>
<dbReference type="OrthoDB" id="5972981at2759"/>
<dbReference type="PhylomeDB" id="Q8BMK0"/>
<dbReference type="TreeFam" id="TF331041"/>
<dbReference type="BioGRID-ORCS" id="70012">
    <property type="hits" value="6 hits in 76 CRISPR screens"/>
</dbReference>
<dbReference type="ChiTaRS" id="Cep85">
    <property type="organism name" value="mouse"/>
</dbReference>
<dbReference type="PRO" id="PR:Q8BMK0"/>
<dbReference type="Proteomes" id="UP000000589">
    <property type="component" value="Chromosome 4"/>
</dbReference>
<dbReference type="RNAct" id="Q8BMK0">
    <property type="molecule type" value="protein"/>
</dbReference>
<dbReference type="Bgee" id="ENSMUSG00000037443">
    <property type="expression patterns" value="Expressed in right kidney and 169 other cell types or tissues"/>
</dbReference>
<dbReference type="ExpressionAtlas" id="Q8BMK0">
    <property type="expression patterns" value="baseline and differential"/>
</dbReference>
<dbReference type="GO" id="GO:0005938">
    <property type="term" value="C:cell cortex"/>
    <property type="evidence" value="ECO:0007669"/>
    <property type="project" value="UniProtKB-SubCell"/>
</dbReference>
<dbReference type="GO" id="GO:0005814">
    <property type="term" value="C:centriole"/>
    <property type="evidence" value="ECO:0000250"/>
    <property type="project" value="UniProtKB"/>
</dbReference>
<dbReference type="GO" id="GO:0005813">
    <property type="term" value="C:centrosome"/>
    <property type="evidence" value="ECO:0000250"/>
    <property type="project" value="UniProtKB"/>
</dbReference>
<dbReference type="GO" id="GO:0005829">
    <property type="term" value="C:cytosol"/>
    <property type="evidence" value="ECO:0007669"/>
    <property type="project" value="Ensembl"/>
</dbReference>
<dbReference type="GO" id="GO:0005794">
    <property type="term" value="C:Golgi apparatus"/>
    <property type="evidence" value="ECO:0007669"/>
    <property type="project" value="Ensembl"/>
</dbReference>
<dbReference type="GO" id="GO:0005730">
    <property type="term" value="C:nucleolus"/>
    <property type="evidence" value="ECO:0000250"/>
    <property type="project" value="UniProtKB"/>
</dbReference>
<dbReference type="GO" id="GO:0000242">
    <property type="term" value="C:pericentriolar material"/>
    <property type="evidence" value="ECO:0000250"/>
    <property type="project" value="UniProtKB"/>
</dbReference>
<dbReference type="GO" id="GO:0000922">
    <property type="term" value="C:spindle pole"/>
    <property type="evidence" value="ECO:0000250"/>
    <property type="project" value="UniProtKB"/>
</dbReference>
<dbReference type="GO" id="GO:0042802">
    <property type="term" value="F:identical protein binding"/>
    <property type="evidence" value="ECO:0000250"/>
    <property type="project" value="UniProtKB"/>
</dbReference>
<dbReference type="GO" id="GO:0007099">
    <property type="term" value="P:centriole replication"/>
    <property type="evidence" value="ECO:0000250"/>
    <property type="project" value="UniProtKB"/>
</dbReference>
<dbReference type="GO" id="GO:0007059">
    <property type="term" value="P:chromosome segregation"/>
    <property type="evidence" value="ECO:0007669"/>
    <property type="project" value="UniProtKB-KW"/>
</dbReference>
<dbReference type="GO" id="GO:0006469">
    <property type="term" value="P:negative regulation of protein kinase activity"/>
    <property type="evidence" value="ECO:0000250"/>
    <property type="project" value="UniProtKB"/>
</dbReference>
<dbReference type="GO" id="GO:0001764">
    <property type="term" value="P:neuron migration"/>
    <property type="evidence" value="ECO:0000250"/>
    <property type="project" value="UniProtKB"/>
</dbReference>
<dbReference type="GO" id="GO:0046602">
    <property type="term" value="P:regulation of mitotic centrosome separation"/>
    <property type="evidence" value="ECO:0000250"/>
    <property type="project" value="UniProtKB"/>
</dbReference>
<dbReference type="InterPro" id="IPR040210">
    <property type="entry name" value="Cep85/Cep85L"/>
</dbReference>
<dbReference type="PANTHER" id="PTHR31075">
    <property type="entry name" value="CENTROSOMAL PROTEIN OF 85 KDA"/>
    <property type="match status" value="1"/>
</dbReference>
<dbReference type="PANTHER" id="PTHR31075:SF3">
    <property type="entry name" value="CENTROSOMAL PROTEIN OF 85 KDA"/>
    <property type="match status" value="1"/>
</dbReference>
<dbReference type="Pfam" id="PF24555">
    <property type="entry name" value="CC4_CEP85"/>
    <property type="match status" value="1"/>
</dbReference>
<gene>
    <name type="primary">Cep85</name>
    <name type="synonym">Ccdc21</name>
</gene>
<reference key="1">
    <citation type="journal article" date="2005" name="Science">
        <title>The transcriptional landscape of the mammalian genome.</title>
        <authorList>
            <person name="Carninci P."/>
            <person name="Kasukawa T."/>
            <person name="Katayama S."/>
            <person name="Gough J."/>
            <person name="Frith M.C."/>
            <person name="Maeda N."/>
            <person name="Oyama R."/>
            <person name="Ravasi T."/>
            <person name="Lenhard B."/>
            <person name="Wells C."/>
            <person name="Kodzius R."/>
            <person name="Shimokawa K."/>
            <person name="Bajic V.B."/>
            <person name="Brenner S.E."/>
            <person name="Batalov S."/>
            <person name="Forrest A.R."/>
            <person name="Zavolan M."/>
            <person name="Davis M.J."/>
            <person name="Wilming L.G."/>
            <person name="Aidinis V."/>
            <person name="Allen J.E."/>
            <person name="Ambesi-Impiombato A."/>
            <person name="Apweiler R."/>
            <person name="Aturaliya R.N."/>
            <person name="Bailey T.L."/>
            <person name="Bansal M."/>
            <person name="Baxter L."/>
            <person name="Beisel K.W."/>
            <person name="Bersano T."/>
            <person name="Bono H."/>
            <person name="Chalk A.M."/>
            <person name="Chiu K.P."/>
            <person name="Choudhary V."/>
            <person name="Christoffels A."/>
            <person name="Clutterbuck D.R."/>
            <person name="Crowe M.L."/>
            <person name="Dalla E."/>
            <person name="Dalrymple B.P."/>
            <person name="de Bono B."/>
            <person name="Della Gatta G."/>
            <person name="di Bernardo D."/>
            <person name="Down T."/>
            <person name="Engstrom P."/>
            <person name="Fagiolini M."/>
            <person name="Faulkner G."/>
            <person name="Fletcher C.F."/>
            <person name="Fukushima T."/>
            <person name="Furuno M."/>
            <person name="Futaki S."/>
            <person name="Gariboldi M."/>
            <person name="Georgii-Hemming P."/>
            <person name="Gingeras T.R."/>
            <person name="Gojobori T."/>
            <person name="Green R.E."/>
            <person name="Gustincich S."/>
            <person name="Harbers M."/>
            <person name="Hayashi Y."/>
            <person name="Hensch T.K."/>
            <person name="Hirokawa N."/>
            <person name="Hill D."/>
            <person name="Huminiecki L."/>
            <person name="Iacono M."/>
            <person name="Ikeo K."/>
            <person name="Iwama A."/>
            <person name="Ishikawa T."/>
            <person name="Jakt M."/>
            <person name="Kanapin A."/>
            <person name="Katoh M."/>
            <person name="Kawasawa Y."/>
            <person name="Kelso J."/>
            <person name="Kitamura H."/>
            <person name="Kitano H."/>
            <person name="Kollias G."/>
            <person name="Krishnan S.P."/>
            <person name="Kruger A."/>
            <person name="Kummerfeld S.K."/>
            <person name="Kurochkin I.V."/>
            <person name="Lareau L.F."/>
            <person name="Lazarevic D."/>
            <person name="Lipovich L."/>
            <person name="Liu J."/>
            <person name="Liuni S."/>
            <person name="McWilliam S."/>
            <person name="Madan Babu M."/>
            <person name="Madera M."/>
            <person name="Marchionni L."/>
            <person name="Matsuda H."/>
            <person name="Matsuzawa S."/>
            <person name="Miki H."/>
            <person name="Mignone F."/>
            <person name="Miyake S."/>
            <person name="Morris K."/>
            <person name="Mottagui-Tabar S."/>
            <person name="Mulder N."/>
            <person name="Nakano N."/>
            <person name="Nakauchi H."/>
            <person name="Ng P."/>
            <person name="Nilsson R."/>
            <person name="Nishiguchi S."/>
            <person name="Nishikawa S."/>
            <person name="Nori F."/>
            <person name="Ohara O."/>
            <person name="Okazaki Y."/>
            <person name="Orlando V."/>
            <person name="Pang K.C."/>
            <person name="Pavan W.J."/>
            <person name="Pavesi G."/>
            <person name="Pesole G."/>
            <person name="Petrovsky N."/>
            <person name="Piazza S."/>
            <person name="Reed J."/>
            <person name="Reid J.F."/>
            <person name="Ring B.Z."/>
            <person name="Ringwald M."/>
            <person name="Rost B."/>
            <person name="Ruan Y."/>
            <person name="Salzberg S.L."/>
            <person name="Sandelin A."/>
            <person name="Schneider C."/>
            <person name="Schoenbach C."/>
            <person name="Sekiguchi K."/>
            <person name="Semple C.A."/>
            <person name="Seno S."/>
            <person name="Sessa L."/>
            <person name="Sheng Y."/>
            <person name="Shibata Y."/>
            <person name="Shimada H."/>
            <person name="Shimada K."/>
            <person name="Silva D."/>
            <person name="Sinclair B."/>
            <person name="Sperling S."/>
            <person name="Stupka E."/>
            <person name="Sugiura K."/>
            <person name="Sultana R."/>
            <person name="Takenaka Y."/>
            <person name="Taki K."/>
            <person name="Tammoja K."/>
            <person name="Tan S.L."/>
            <person name="Tang S."/>
            <person name="Taylor M.S."/>
            <person name="Tegner J."/>
            <person name="Teichmann S.A."/>
            <person name="Ueda H.R."/>
            <person name="van Nimwegen E."/>
            <person name="Verardo R."/>
            <person name="Wei C.L."/>
            <person name="Yagi K."/>
            <person name="Yamanishi H."/>
            <person name="Zabarovsky E."/>
            <person name="Zhu S."/>
            <person name="Zimmer A."/>
            <person name="Hide W."/>
            <person name="Bult C."/>
            <person name="Grimmond S.M."/>
            <person name="Teasdale R.D."/>
            <person name="Liu E.T."/>
            <person name="Brusic V."/>
            <person name="Quackenbush J."/>
            <person name="Wahlestedt C."/>
            <person name="Mattick J.S."/>
            <person name="Hume D.A."/>
            <person name="Kai C."/>
            <person name="Sasaki D."/>
            <person name="Tomaru Y."/>
            <person name="Fukuda S."/>
            <person name="Kanamori-Katayama M."/>
            <person name="Suzuki M."/>
            <person name="Aoki J."/>
            <person name="Arakawa T."/>
            <person name="Iida J."/>
            <person name="Imamura K."/>
            <person name="Itoh M."/>
            <person name="Kato T."/>
            <person name="Kawaji H."/>
            <person name="Kawagashira N."/>
            <person name="Kawashima T."/>
            <person name="Kojima M."/>
            <person name="Kondo S."/>
            <person name="Konno H."/>
            <person name="Nakano K."/>
            <person name="Ninomiya N."/>
            <person name="Nishio T."/>
            <person name="Okada M."/>
            <person name="Plessy C."/>
            <person name="Shibata K."/>
            <person name="Shiraki T."/>
            <person name="Suzuki S."/>
            <person name="Tagami M."/>
            <person name="Waki K."/>
            <person name="Watahiki A."/>
            <person name="Okamura-Oho Y."/>
            <person name="Suzuki H."/>
            <person name="Kawai J."/>
            <person name="Hayashizaki Y."/>
        </authorList>
    </citation>
    <scope>NUCLEOTIDE SEQUENCE [LARGE SCALE MRNA]</scope>
    <source>
        <strain>C57BL/6J</strain>
        <tissue>Embryo</tissue>
        <tissue>Kidney</tissue>
    </source>
</reference>
<reference key="2">
    <citation type="journal article" date="2004" name="Genome Res.">
        <title>The status, quality, and expansion of the NIH full-length cDNA project: the Mammalian Gene Collection (MGC).</title>
        <authorList>
            <consortium name="The MGC Project Team"/>
        </authorList>
    </citation>
    <scope>NUCLEOTIDE SEQUENCE [LARGE SCALE MRNA]</scope>
    <source>
        <strain>C57BL/6J</strain>
        <strain>FVB/N</strain>
        <tissue>Mammary gland</tissue>
    </source>
</reference>
<reference key="3">
    <citation type="journal article" date="2010" name="Cell">
        <title>A tissue-specific atlas of mouse protein phosphorylation and expression.</title>
        <authorList>
            <person name="Huttlin E.L."/>
            <person name="Jedrychowski M.P."/>
            <person name="Elias J.E."/>
            <person name="Goswami T."/>
            <person name="Rad R."/>
            <person name="Beausoleil S.A."/>
            <person name="Villen J."/>
            <person name="Haas W."/>
            <person name="Sowa M.E."/>
            <person name="Gygi S.P."/>
        </authorList>
    </citation>
    <scope>PHOSPHORYLATION [LARGE SCALE ANALYSIS] AT SER-16</scope>
    <scope>IDENTIFICATION BY MASS SPECTROMETRY [LARGE SCALE ANALYSIS]</scope>
    <source>
        <tissue>Liver</tissue>
        <tissue>Spleen</tissue>
        <tissue>Testis</tissue>
    </source>
</reference>
<protein>
    <recommendedName>
        <fullName>Centrosomal protein of 85 kDa</fullName>
        <shortName>Cep85</shortName>
    </recommendedName>
    <alternativeName>
        <fullName>Coiled-coil domain-containing protein 21</fullName>
    </alternativeName>
</protein>
<feature type="chain" id="PRO_0000233661" description="Centrosomal protein of 85 kDa">
    <location>
        <begin position="1"/>
        <end position="761"/>
    </location>
</feature>
<feature type="region of interest" description="Disordered" evidence="3">
    <location>
        <begin position="1"/>
        <end position="33"/>
    </location>
</feature>
<feature type="region of interest" description="Disordered" evidence="3">
    <location>
        <begin position="95"/>
        <end position="117"/>
    </location>
</feature>
<feature type="region of interest" description="Disordered" evidence="3">
    <location>
        <begin position="226"/>
        <end position="279"/>
    </location>
</feature>
<feature type="region of interest" description="Mediates interaction with NEK2 and is required for its function in the suppression of centrosome disjunction" evidence="1">
    <location>
        <begin position="256"/>
        <end position="432"/>
    </location>
</feature>
<feature type="region of interest" description="Required for centrosome localization and for its function in the suppression of centrosome disjunction" evidence="1">
    <location>
        <begin position="433"/>
        <end position="475"/>
    </location>
</feature>
<feature type="region of interest" description="Disordered" evidence="3">
    <location>
        <begin position="435"/>
        <end position="472"/>
    </location>
</feature>
<feature type="coiled-coil region" evidence="2">
    <location>
        <begin position="333"/>
        <end position="656"/>
    </location>
</feature>
<feature type="coiled-coil region" evidence="2">
    <location>
        <begin position="723"/>
        <end position="749"/>
    </location>
</feature>
<feature type="compositionally biased region" description="Polar residues" evidence="3">
    <location>
        <begin position="14"/>
        <end position="33"/>
    </location>
</feature>
<feature type="compositionally biased region" description="Basic and acidic residues" evidence="3">
    <location>
        <begin position="435"/>
        <end position="454"/>
    </location>
</feature>
<feature type="compositionally biased region" description="Basic and acidic residues" evidence="3">
    <location>
        <begin position="462"/>
        <end position="472"/>
    </location>
</feature>
<feature type="modified residue" description="Phosphoserine" evidence="5">
    <location>
        <position position="16"/>
    </location>
</feature>
<feature type="modified residue" description="Phosphoserine" evidence="1">
    <location>
        <position position="140"/>
    </location>
</feature>
<feature type="sequence conflict" description="In Ref. 1; BAC27110." evidence="4" ref="1">
    <original>E</original>
    <variation>G</variation>
    <location>
        <position position="68"/>
    </location>
</feature>
<feature type="sequence conflict" description="In Ref. 2; AAH31729." evidence="4" ref="2">
    <location>
        <begin position="301"/>
        <end position="302"/>
    </location>
</feature>
<keyword id="KW-0159">Chromosome partition</keyword>
<keyword id="KW-0175">Coiled coil</keyword>
<keyword id="KW-0963">Cytoplasm</keyword>
<keyword id="KW-0206">Cytoskeleton</keyword>
<keyword id="KW-0539">Nucleus</keyword>
<keyword id="KW-0597">Phosphoprotein</keyword>
<keyword id="KW-1185">Reference proteome</keyword>
<accession>Q8BMK0</accession>
<accession>Q8BUF1</accession>
<accession>Q8K0E6</accession>
<sequence>MAMQEKYPNDRSHATSPGSNVIQKGSSLGTEWQTPVISETFRSRFSRCSSIADSGDTAIGTSCSDIAEDFCSSSGSPSFQPIKSHITIPTAHVMPSTLGASPAKPNSAPSGPSSAKLPLSGLTEGVGMTRNGDFGAVKRSPGLARDFMYLPSAAGENGSQQSWFPAVGHEREGEMRKFDVPSMESTLNQPAMLETLYSDPHYRAHFPNPRPDTNKDVYKVLPESKKAPGSGAVFERNGPHASSSGVLPLGLQPAPGLSKSLSSQVWQPSPDPWHPGEQSCELSTCRQQLELIRLQMEQMQLQNGAMCHHPAAFAPLLPTLEPAQWLSILNSNEHLLKEKELLIDKQRKHISQLEQKVRESELQVHSALLGRPAPFGDVCLLRLQELQRENTFLRAQFAQKTEALSKEKMELEKKLSASEVEIQLIRESLKVTLQKHSEEGKKQEERVKGRDKHINNLKKKCQKESEQNREKQQRIETLERYLADLPTLEDHQKQTEQLKDAELKNTELQERVAELETLLEDTQATCREKEVQLESLRQREADLSSARHSFQDKQSVEEANGENLRVDMESQQKECDSLRKMVERQQLKMEQLHSQVQSQKQELAQEEGINQALREEAQRRETALQQMRTAVKELSVQNQDLIEKNLTLQEHLRQAQPGSSSSPDSAQLACELHQELASCLQDLQAVCSIVTQRAQGHNPNLSLLLGIHSTQHPGTQLDLQKPDVIRRKLEEVQQLRHDIEDLRTSLSDRYAQDMGENCATQ</sequence>